<keyword id="KW-0963">Cytoplasm</keyword>
<keyword id="KW-0488">Methylation</keyword>
<keyword id="KW-0648">Protein biosynthesis</keyword>
<keyword id="KW-1185">Reference proteome</keyword>
<comment type="function">
    <text evidence="1">Peptide chain release factor 1 directs the termination of translation in response to the peptide chain termination codons UAG and UAA.</text>
</comment>
<comment type="subcellular location">
    <subcellularLocation>
        <location evidence="1">Cytoplasm</location>
    </subcellularLocation>
</comment>
<comment type="PTM">
    <text evidence="1">Methylated by PrmC. Methylation increases the termination efficiency of RF1.</text>
</comment>
<comment type="similarity">
    <text evidence="1">Belongs to the prokaryotic/mitochondrial release factor family.</text>
</comment>
<organism>
    <name type="scientific">Lactiplantibacillus plantarum (strain ATCC BAA-793 / NCIMB 8826 / WCFS1)</name>
    <name type="common">Lactobacillus plantarum</name>
    <dbReference type="NCBI Taxonomy" id="220668"/>
    <lineage>
        <taxon>Bacteria</taxon>
        <taxon>Bacillati</taxon>
        <taxon>Bacillota</taxon>
        <taxon>Bacilli</taxon>
        <taxon>Lactobacillales</taxon>
        <taxon>Lactobacillaceae</taxon>
        <taxon>Lactiplantibacillus</taxon>
    </lineage>
</organism>
<reference key="1">
    <citation type="journal article" date="2003" name="Proc. Natl. Acad. Sci. U.S.A.">
        <title>Complete genome sequence of Lactobacillus plantarum WCFS1.</title>
        <authorList>
            <person name="Kleerebezem M."/>
            <person name="Boekhorst J."/>
            <person name="van Kranenburg R."/>
            <person name="Molenaar D."/>
            <person name="Kuipers O.P."/>
            <person name="Leer R."/>
            <person name="Tarchini R."/>
            <person name="Peters S.A."/>
            <person name="Sandbrink H.M."/>
            <person name="Fiers M.W.E.J."/>
            <person name="Stiekema W."/>
            <person name="Klein Lankhorst R.M."/>
            <person name="Bron P.A."/>
            <person name="Hoffer S.M."/>
            <person name="Nierop Groot M.N."/>
            <person name="Kerkhoven R."/>
            <person name="De Vries M."/>
            <person name="Ursing B."/>
            <person name="De Vos W.M."/>
            <person name="Siezen R.J."/>
        </authorList>
    </citation>
    <scope>NUCLEOTIDE SEQUENCE [LARGE SCALE GENOMIC DNA]</scope>
    <source>
        <strain>ATCC BAA-793 / NCIMB 8826 / WCFS1</strain>
    </source>
</reference>
<reference key="2">
    <citation type="journal article" date="2012" name="J. Bacteriol.">
        <title>Complete resequencing and reannotation of the Lactobacillus plantarum WCFS1 genome.</title>
        <authorList>
            <person name="Siezen R.J."/>
            <person name="Francke C."/>
            <person name="Renckens B."/>
            <person name="Boekhorst J."/>
            <person name="Wels M."/>
            <person name="Kleerebezem M."/>
            <person name="van Hijum S.A."/>
        </authorList>
    </citation>
    <scope>NUCLEOTIDE SEQUENCE [LARGE SCALE GENOMIC DNA]</scope>
    <scope>GENOME REANNOTATION</scope>
    <source>
        <strain>ATCC BAA-793 / NCIMB 8826 / WCFS1</strain>
    </source>
</reference>
<accession>Q88UT2</accession>
<accession>F9UQS5</accession>
<proteinExistence type="inferred from homology"/>
<dbReference type="EMBL" id="AL935263">
    <property type="protein sequence ID" value="CCC79564.1"/>
    <property type="molecule type" value="Genomic_DNA"/>
</dbReference>
<dbReference type="RefSeq" id="WP_003641433.1">
    <property type="nucleotide sequence ID" value="NC_004567.2"/>
</dbReference>
<dbReference type="RefSeq" id="YP_004890078.1">
    <property type="nucleotide sequence ID" value="NC_004567.2"/>
</dbReference>
<dbReference type="SMR" id="Q88UT2"/>
<dbReference type="STRING" id="220668.lp_2378"/>
<dbReference type="EnsemblBacteria" id="CCC79564">
    <property type="protein sequence ID" value="CCC79564"/>
    <property type="gene ID" value="lp_2378"/>
</dbReference>
<dbReference type="GeneID" id="77215753"/>
<dbReference type="KEGG" id="lpl:lp_2378"/>
<dbReference type="PATRIC" id="fig|220668.9.peg.2010"/>
<dbReference type="eggNOG" id="COG0216">
    <property type="taxonomic scope" value="Bacteria"/>
</dbReference>
<dbReference type="HOGENOM" id="CLU_036856_0_1_9"/>
<dbReference type="OrthoDB" id="9806673at2"/>
<dbReference type="PhylomeDB" id="Q88UT2"/>
<dbReference type="Proteomes" id="UP000000432">
    <property type="component" value="Chromosome"/>
</dbReference>
<dbReference type="GO" id="GO:0005737">
    <property type="term" value="C:cytoplasm"/>
    <property type="evidence" value="ECO:0007669"/>
    <property type="project" value="UniProtKB-SubCell"/>
</dbReference>
<dbReference type="GO" id="GO:0016149">
    <property type="term" value="F:translation release factor activity, codon specific"/>
    <property type="evidence" value="ECO:0007669"/>
    <property type="project" value="UniProtKB-UniRule"/>
</dbReference>
<dbReference type="FunFam" id="3.30.160.20:FF:000004">
    <property type="entry name" value="Peptide chain release factor 1"/>
    <property type="match status" value="1"/>
</dbReference>
<dbReference type="FunFam" id="3.30.70.1660:FF:000002">
    <property type="entry name" value="Peptide chain release factor 1"/>
    <property type="match status" value="1"/>
</dbReference>
<dbReference type="FunFam" id="3.30.70.1660:FF:000004">
    <property type="entry name" value="Peptide chain release factor 1"/>
    <property type="match status" value="1"/>
</dbReference>
<dbReference type="Gene3D" id="3.30.160.20">
    <property type="match status" value="1"/>
</dbReference>
<dbReference type="Gene3D" id="3.30.70.1660">
    <property type="match status" value="1"/>
</dbReference>
<dbReference type="Gene3D" id="6.10.140.1950">
    <property type="match status" value="1"/>
</dbReference>
<dbReference type="HAMAP" id="MF_00093">
    <property type="entry name" value="Rel_fac_1"/>
    <property type="match status" value="1"/>
</dbReference>
<dbReference type="InterPro" id="IPR005139">
    <property type="entry name" value="PCRF"/>
</dbReference>
<dbReference type="InterPro" id="IPR000352">
    <property type="entry name" value="Pep_chain_release_fac_I"/>
</dbReference>
<dbReference type="InterPro" id="IPR045853">
    <property type="entry name" value="Pep_chain_release_fac_I_sf"/>
</dbReference>
<dbReference type="InterPro" id="IPR050057">
    <property type="entry name" value="Prokaryotic/Mito_RF"/>
</dbReference>
<dbReference type="InterPro" id="IPR004373">
    <property type="entry name" value="RF-1"/>
</dbReference>
<dbReference type="NCBIfam" id="TIGR00019">
    <property type="entry name" value="prfA"/>
    <property type="match status" value="1"/>
</dbReference>
<dbReference type="NCBIfam" id="NF001859">
    <property type="entry name" value="PRK00591.1"/>
    <property type="match status" value="1"/>
</dbReference>
<dbReference type="PANTHER" id="PTHR43804">
    <property type="entry name" value="LD18447P"/>
    <property type="match status" value="1"/>
</dbReference>
<dbReference type="PANTHER" id="PTHR43804:SF7">
    <property type="entry name" value="LD18447P"/>
    <property type="match status" value="1"/>
</dbReference>
<dbReference type="Pfam" id="PF03462">
    <property type="entry name" value="PCRF"/>
    <property type="match status" value="1"/>
</dbReference>
<dbReference type="Pfam" id="PF00472">
    <property type="entry name" value="RF-1"/>
    <property type="match status" value="1"/>
</dbReference>
<dbReference type="SMART" id="SM00937">
    <property type="entry name" value="PCRF"/>
    <property type="match status" value="1"/>
</dbReference>
<dbReference type="SUPFAM" id="SSF75620">
    <property type="entry name" value="Release factor"/>
    <property type="match status" value="1"/>
</dbReference>
<dbReference type="PROSITE" id="PS00745">
    <property type="entry name" value="RF_PROK_I"/>
    <property type="match status" value="1"/>
</dbReference>
<feature type="chain" id="PRO_0000177686" description="Peptide chain release factor 1">
    <location>
        <begin position="1"/>
        <end position="360"/>
    </location>
</feature>
<feature type="modified residue" description="N5-methylglutamine" evidence="1">
    <location>
        <position position="236"/>
    </location>
</feature>
<gene>
    <name evidence="1" type="primary">prfA</name>
    <name type="ordered locus">lp_2378</name>
</gene>
<sequence>MDKFFDKLQAVADRYEELGELLSDPEVISDSQRFMKLSKEMGNIRETVEKYNHYKEVTSQIEENDELLHEKLDDEMNAMVKDDLKNLNAEKDQLEHEITLLMLPKDPNDDKNIIMEIHGAAGGDEASLFAADLFNMYSKYAERQGWQVEVADRNETEVGGFKEIVLIISGDKVYSKLKYESGAHRVQRVPVTESAGRVHTSTATVGVMPEAQDVDIDIDQKDIRTDVFRSSGAGGQHINKTSSAVRMTHLPTGIVVSMQDQRSQQQNRAKAMEILRARVYDYYQSREQNEYDAERKSAVGTGDRSERIRTYNFPQNRVTDHRIGLTLNKLDRVMNGELDEVIDALVLADQAEKMERLTNE</sequence>
<evidence type="ECO:0000255" key="1">
    <source>
        <dbReference type="HAMAP-Rule" id="MF_00093"/>
    </source>
</evidence>
<name>RF1_LACPL</name>
<protein>
    <recommendedName>
        <fullName evidence="1">Peptide chain release factor 1</fullName>
        <shortName evidence="1">RF-1</shortName>
    </recommendedName>
</protein>